<reference key="1">
    <citation type="submission" date="1996-11" db="EMBL/GenBank/DDBJ databases">
        <authorList>
            <person name="Walker E.S."/>
            <person name="Preston R.A."/>
            <person name="Post J.C."/>
            <person name="Ehrlich G.D."/>
            <person name="Klingman K.L."/>
        </authorList>
    </citation>
    <scope>NUCLEOTIDE SEQUENCE [GENOMIC DNA]</scope>
    <source>
        <strain>ATCC 25238 / DSM 9143 / BCRC 10629 / CCUG 353 / CIP 73.21 / NCTC 11020 / Ne 11</strain>
    </source>
</reference>
<name>SYGB_MORCA</name>
<feature type="chain" id="PRO_0000072913" description="Glycine--tRNA ligase beta subunit">
    <location>
        <begin position="1"/>
        <end position="266" status="greater than"/>
    </location>
</feature>
<feature type="non-terminal residue">
    <location>
        <position position="266"/>
    </location>
</feature>
<keyword id="KW-0030">Aminoacyl-tRNA synthetase</keyword>
<keyword id="KW-0067">ATP-binding</keyword>
<keyword id="KW-0963">Cytoplasm</keyword>
<keyword id="KW-0436">Ligase</keyword>
<keyword id="KW-0547">Nucleotide-binding</keyword>
<keyword id="KW-0648">Protein biosynthesis</keyword>
<organism>
    <name type="scientific">Moraxella catarrhalis</name>
    <name type="common">Branhamella catarrhalis</name>
    <dbReference type="NCBI Taxonomy" id="480"/>
    <lineage>
        <taxon>Bacteria</taxon>
        <taxon>Pseudomonadati</taxon>
        <taxon>Pseudomonadota</taxon>
        <taxon>Gammaproteobacteria</taxon>
        <taxon>Moraxellales</taxon>
        <taxon>Moraxellaceae</taxon>
        <taxon>Moraxella</taxon>
    </lineage>
</organism>
<protein>
    <recommendedName>
        <fullName>Glycine--tRNA ligase beta subunit</fullName>
        <ecNumber>6.1.1.14</ecNumber>
    </recommendedName>
    <alternativeName>
        <fullName>Glycyl-tRNA synthetase beta subunit</fullName>
        <shortName>GlyRS</shortName>
    </alternativeName>
</protein>
<dbReference type="EC" id="6.1.1.14"/>
<dbReference type="EMBL" id="U73324">
    <property type="protein sequence ID" value="AAB18210.1"/>
    <property type="molecule type" value="Genomic_DNA"/>
</dbReference>
<dbReference type="SMR" id="P77891"/>
<dbReference type="eggNOG" id="COG0751">
    <property type="taxonomic scope" value="Bacteria"/>
</dbReference>
<dbReference type="GO" id="GO:0005829">
    <property type="term" value="C:cytosol"/>
    <property type="evidence" value="ECO:0007669"/>
    <property type="project" value="TreeGrafter"/>
</dbReference>
<dbReference type="GO" id="GO:0005524">
    <property type="term" value="F:ATP binding"/>
    <property type="evidence" value="ECO:0007669"/>
    <property type="project" value="UniProtKB-KW"/>
</dbReference>
<dbReference type="GO" id="GO:0004820">
    <property type="term" value="F:glycine-tRNA ligase activity"/>
    <property type="evidence" value="ECO:0007669"/>
    <property type="project" value="UniProtKB-EC"/>
</dbReference>
<dbReference type="GO" id="GO:0006426">
    <property type="term" value="P:glycyl-tRNA aminoacylation"/>
    <property type="evidence" value="ECO:0007669"/>
    <property type="project" value="InterPro"/>
</dbReference>
<dbReference type="InterPro" id="IPR015944">
    <property type="entry name" value="Gly-tRNA-synth_bsu"/>
</dbReference>
<dbReference type="InterPro" id="IPR006194">
    <property type="entry name" value="Gly-tRNA-synth_heterodimer"/>
</dbReference>
<dbReference type="PANTHER" id="PTHR30075:SF2">
    <property type="entry name" value="GLYCINE--TRNA LIGASE, CHLOROPLASTIC_MITOCHONDRIAL 2"/>
    <property type="match status" value="1"/>
</dbReference>
<dbReference type="PANTHER" id="PTHR30075">
    <property type="entry name" value="GLYCYL-TRNA SYNTHETASE"/>
    <property type="match status" value="1"/>
</dbReference>
<dbReference type="Pfam" id="PF02092">
    <property type="entry name" value="tRNA_synt_2f"/>
    <property type="match status" value="1"/>
</dbReference>
<dbReference type="PRINTS" id="PR01045">
    <property type="entry name" value="TRNASYNTHGB"/>
</dbReference>
<accession>P77891</accession>
<proteinExistence type="inferred from homology"/>
<evidence type="ECO:0000250" key="1"/>
<evidence type="ECO:0000305" key="2"/>
<gene>
    <name type="primary">glyS</name>
</gene>
<comment type="catalytic activity">
    <reaction>
        <text>tRNA(Gly) + glycine + ATP = glycyl-tRNA(Gly) + AMP + diphosphate</text>
        <dbReference type="Rhea" id="RHEA:16013"/>
        <dbReference type="Rhea" id="RHEA-COMP:9664"/>
        <dbReference type="Rhea" id="RHEA-COMP:9683"/>
        <dbReference type="ChEBI" id="CHEBI:30616"/>
        <dbReference type="ChEBI" id="CHEBI:33019"/>
        <dbReference type="ChEBI" id="CHEBI:57305"/>
        <dbReference type="ChEBI" id="CHEBI:78442"/>
        <dbReference type="ChEBI" id="CHEBI:78522"/>
        <dbReference type="ChEBI" id="CHEBI:456215"/>
        <dbReference type="EC" id="6.1.1.14"/>
    </reaction>
</comment>
<comment type="subunit">
    <text evidence="1">Tetramer of two alpha and two beta subunits.</text>
</comment>
<comment type="subcellular location">
    <subcellularLocation>
        <location evidence="1">Cytoplasm</location>
    </subcellularLocation>
</comment>
<comment type="similarity">
    <text evidence="2">Belongs to the class-II aminoacyl-tRNA synthetase family.</text>
</comment>
<sequence>MTTILFELGTEELPPKNLKTLRDALKNSVGTLLNDQNISFDDIHAFAAPRRLALTITGVGEFQPDRIETKKGPSVKAAFDDAGNLTRAGQGFLQGLNATGRNLSVKDLGRIADKKGEYIAYDLTIKGEKITDLMPNILQKALDDLPIAKRMRSGIDRHEFIRPVHWIVLMSDDVVIEATIQGHKTGNQSRGHRYHSPDFFAIDHADHYENLLKNHHVIADFDQRQADILAQVKTLADDVNGTAIMPQELLDEVTALVDLPVALRAS</sequence>